<comment type="function">
    <text evidence="2">Glucosyltransferase that glucosylates the (+) enantiomer of abscisic acid ((+)-ABA). Is not active on structural analogs with alterations to the 8'- and 9'- methyl groups.</text>
</comment>
<comment type="biophysicochemical properties">
    <kinetics>
        <KM evidence="2">280 uM for ABA</KM>
        <Vmax evidence="2">1.8 nmol/sec/mg enzyme</Vmax>
    </kinetics>
    <phDependence>
        <text evidence="2">Optimum pH is 6.5-7.0.</text>
    </phDependence>
</comment>
<comment type="similarity">
    <text evidence="3">Belongs to the UDP-glycosyltransferase family.</text>
</comment>
<evidence type="ECO:0000250" key="1"/>
<evidence type="ECO:0000269" key="2">
    <source>
    </source>
</evidence>
<evidence type="ECO:0000305" key="3"/>
<reference key="1">
    <citation type="journal article" date="2000" name="DNA Res.">
        <title>Structural analysis of Arabidopsis thaliana chromosome 3. I. Sequence features of the regions of 4,504,864 bp covered by sixty P1 and TAC clones.</title>
        <authorList>
            <person name="Sato S."/>
            <person name="Nakamura Y."/>
            <person name="Kaneko T."/>
            <person name="Katoh T."/>
            <person name="Asamizu E."/>
            <person name="Tabata S."/>
        </authorList>
    </citation>
    <scope>NUCLEOTIDE SEQUENCE [LARGE SCALE GENOMIC DNA]</scope>
    <source>
        <strain>cv. Columbia</strain>
    </source>
</reference>
<reference key="2">
    <citation type="journal article" date="2017" name="Plant J.">
        <title>Araport11: a complete reannotation of the Arabidopsis thaliana reference genome.</title>
        <authorList>
            <person name="Cheng C.Y."/>
            <person name="Krishnakumar V."/>
            <person name="Chan A.P."/>
            <person name="Thibaud-Nissen F."/>
            <person name="Schobel S."/>
            <person name="Town C.D."/>
        </authorList>
    </citation>
    <scope>GENOME REANNOTATION</scope>
    <source>
        <strain>cv. Columbia</strain>
    </source>
</reference>
<reference key="3">
    <citation type="submission" date="2006-12" db="EMBL/GenBank/DDBJ databases">
        <title>Arabidopsis ORF clones.</title>
        <authorList>
            <person name="Bautista V.R."/>
            <person name="Kim C.J."/>
            <person name="Chen H."/>
            <person name="Wu S.Y."/>
            <person name="De Los Reyes C."/>
            <person name="Ecker J.R."/>
        </authorList>
    </citation>
    <scope>NUCLEOTIDE SEQUENCE [LARGE SCALE MRNA] OF 49-479</scope>
    <source>
        <strain>cv. Columbia</strain>
    </source>
</reference>
<reference key="4">
    <citation type="journal article" date="2001" name="J. Biol. Chem.">
        <title>Phylogenetic analysis of the UDP-glycosyltransferase multigene family of Arabidopsis thaliana.</title>
        <authorList>
            <person name="Li Y."/>
            <person name="Baldauf S."/>
            <person name="Lim E.K."/>
            <person name="Bowles D.J."/>
        </authorList>
    </citation>
    <scope>GENE FAMILY</scope>
</reference>
<reference key="5">
    <citation type="journal article" date="2005" name="FEBS Lett.">
        <title>The use of abscisic acid analogues to analyse the substrate selectivity of UGT71B6, a UDP-glycosyltransferase of Arabidopsis thaliana.</title>
        <authorList>
            <person name="Priest D.M."/>
            <person name="Jackson R.G."/>
            <person name="Ashford D.A."/>
            <person name="Abrams S.R."/>
            <person name="Bowles D.J."/>
        </authorList>
    </citation>
    <scope>FUNCTION</scope>
    <scope>BIOPHYSICOCHEMICAL PROPERTIES</scope>
</reference>
<keyword id="KW-0328">Glycosyltransferase</keyword>
<keyword id="KW-1185">Reference proteome</keyword>
<keyword id="KW-0808">Transferase</keyword>
<name>U71B6_ARATH</name>
<organism>
    <name type="scientific">Arabidopsis thaliana</name>
    <name type="common">Mouse-ear cress</name>
    <dbReference type="NCBI Taxonomy" id="3702"/>
    <lineage>
        <taxon>Eukaryota</taxon>
        <taxon>Viridiplantae</taxon>
        <taxon>Streptophyta</taxon>
        <taxon>Embryophyta</taxon>
        <taxon>Tracheophyta</taxon>
        <taxon>Spermatophyta</taxon>
        <taxon>Magnoliopsida</taxon>
        <taxon>eudicotyledons</taxon>
        <taxon>Gunneridae</taxon>
        <taxon>Pentapetalae</taxon>
        <taxon>rosids</taxon>
        <taxon>malvids</taxon>
        <taxon>Brassicales</taxon>
        <taxon>Brassicaceae</taxon>
        <taxon>Camelineae</taxon>
        <taxon>Arabidopsis</taxon>
    </lineage>
</organism>
<feature type="chain" id="PRO_0000409050" description="UDP-glycosyltransferase 71B6">
    <location>
        <begin position="1"/>
        <end position="479"/>
    </location>
</feature>
<feature type="binding site" evidence="1">
    <location>
        <position position="275"/>
    </location>
    <ligand>
        <name>UDP-alpha-D-glucose</name>
        <dbReference type="ChEBI" id="CHEBI:58885"/>
    </ligand>
</feature>
<feature type="binding site" evidence="1">
    <location>
        <begin position="342"/>
        <end position="344"/>
    </location>
    <ligand>
        <name>UDP-alpha-D-glucose</name>
        <dbReference type="ChEBI" id="CHEBI:58885"/>
    </ligand>
</feature>
<feature type="binding site" evidence="1">
    <location>
        <begin position="359"/>
        <end position="367"/>
    </location>
    <ligand>
        <name>UDP-alpha-D-glucose</name>
        <dbReference type="ChEBI" id="CHEBI:58885"/>
    </ligand>
</feature>
<feature type="binding site" evidence="1">
    <location>
        <begin position="381"/>
        <end position="384"/>
    </location>
    <ligand>
        <name>UDP-alpha-D-glucose</name>
        <dbReference type="ChEBI" id="CHEBI:58885"/>
    </ligand>
</feature>
<accession>Q9LSY6</accession>
<accession>A1L4W4</accession>
<protein>
    <recommendedName>
        <fullName>UDP-glycosyltransferase 71B6</fullName>
        <ecNumber>2.4.1.-</ecNumber>
    </recommendedName>
    <alternativeName>
        <fullName>Abscisic acid glycosyltransferase</fullName>
    </alternativeName>
</protein>
<gene>
    <name type="primary">UGT71B6</name>
    <name type="ordered locus">At3g21780</name>
    <name type="ORF">MSD21.11</name>
    <name type="ORF">MSD21.9</name>
</gene>
<sequence>MKIELVFIPSPAISHLMATVEMAEQLVDKNDNLSITVIIISFSSKNTSMITSLTSNNRLRYEIISGGDQQPTELKATDSHIQSLKPLVRDAVAKLVDSTLPDAPRLAGFVVDMYCTSMIDVANEFGVPSYLFYTSNAGFLGLLLHIQFMYDAEDIYDMSELEDSDVELVVPSLTSPYPLKCLPYIFKSKEWLTFFVTQARRFRETKGILVNTVPDLEPQALTFLSNGNIPRAYPVGPLLHLKNVNCDYVDKKQSEILRWLDEQPPRSVVFLCFGSMGGFSEEQVRETALALDRSGHRFLWSLRRASPNILREPPGEFTNLEEILPEGFFDRTANRGKVIGWAEQVAILAKPAIGGFVSHGGWNSTLESLWFGVPMAIWPLYAEQKFNAFEMVEELGLAVEIKKHWRGDLLLGRSEIVTAEEIEKGIICLMEQDSDVRKRVNEISEKCHVALMDGGSSETALKRFIQDVTENIAWSETES</sequence>
<proteinExistence type="evidence at protein level"/>
<dbReference type="EC" id="2.4.1.-"/>
<dbReference type="EMBL" id="AB025634">
    <property type="protein sequence ID" value="BAB02840.1"/>
    <property type="molecule type" value="Genomic_DNA"/>
</dbReference>
<dbReference type="EMBL" id="CP002686">
    <property type="protein sequence ID" value="AEE76551.1"/>
    <property type="molecule type" value="Genomic_DNA"/>
</dbReference>
<dbReference type="EMBL" id="BT029751">
    <property type="protein sequence ID" value="ABM06021.1"/>
    <property type="molecule type" value="mRNA"/>
</dbReference>
<dbReference type="RefSeq" id="NP_188815.2">
    <property type="nucleotide sequence ID" value="NM_113073.3"/>
</dbReference>
<dbReference type="SMR" id="Q9LSY6"/>
<dbReference type="FunCoup" id="Q9LSY6">
    <property type="interactions" value="156"/>
</dbReference>
<dbReference type="STRING" id="3702.Q9LSY6"/>
<dbReference type="CAZy" id="GT1">
    <property type="family name" value="Glycosyltransferase Family 1"/>
</dbReference>
<dbReference type="iPTMnet" id="Q9LSY6"/>
<dbReference type="PaxDb" id="3702-AT3G21780.1"/>
<dbReference type="ProteomicsDB" id="242806"/>
<dbReference type="DNASU" id="821732"/>
<dbReference type="EnsemblPlants" id="AT3G21780.1">
    <property type="protein sequence ID" value="AT3G21780.1"/>
    <property type="gene ID" value="AT3G21780"/>
</dbReference>
<dbReference type="GeneID" id="821732"/>
<dbReference type="Gramene" id="AT3G21780.1">
    <property type="protein sequence ID" value="AT3G21780.1"/>
    <property type="gene ID" value="AT3G21780"/>
</dbReference>
<dbReference type="KEGG" id="ath:AT3G21780"/>
<dbReference type="Araport" id="AT3G21780"/>
<dbReference type="TAIR" id="AT3G21780">
    <property type="gene designation" value="UGT71B6"/>
</dbReference>
<dbReference type="eggNOG" id="KOG1192">
    <property type="taxonomic scope" value="Eukaryota"/>
</dbReference>
<dbReference type="HOGENOM" id="CLU_001724_3_2_1"/>
<dbReference type="InParanoid" id="Q9LSY6"/>
<dbReference type="OMA" id="MAIWPLY"/>
<dbReference type="PhylomeDB" id="Q9LSY6"/>
<dbReference type="BioCyc" id="ARA:AT3G21780-MONOMER"/>
<dbReference type="BioCyc" id="MetaCyc:AT3G21780-MONOMER"/>
<dbReference type="PRO" id="PR:Q9LSY6"/>
<dbReference type="Proteomes" id="UP000006548">
    <property type="component" value="Chromosome 3"/>
</dbReference>
<dbReference type="ExpressionAtlas" id="Q9LSY6">
    <property type="expression patterns" value="baseline and differential"/>
</dbReference>
<dbReference type="GO" id="GO:0035251">
    <property type="term" value="F:UDP-glucosyltransferase activity"/>
    <property type="evidence" value="ECO:0007669"/>
    <property type="project" value="InterPro"/>
</dbReference>
<dbReference type="GO" id="GO:0008194">
    <property type="term" value="F:UDP-glycosyltransferase activity"/>
    <property type="evidence" value="ECO:0000314"/>
    <property type="project" value="TAIR"/>
</dbReference>
<dbReference type="GO" id="GO:0046345">
    <property type="term" value="P:abscisic acid catabolic process"/>
    <property type="evidence" value="ECO:0000304"/>
    <property type="project" value="TAIR"/>
</dbReference>
<dbReference type="GO" id="GO:0009737">
    <property type="term" value="P:response to abscisic acid"/>
    <property type="evidence" value="ECO:0000270"/>
    <property type="project" value="TAIR"/>
</dbReference>
<dbReference type="GO" id="GO:0006970">
    <property type="term" value="P:response to osmotic stress"/>
    <property type="evidence" value="ECO:0000270"/>
    <property type="project" value="TAIR"/>
</dbReference>
<dbReference type="GO" id="GO:0009651">
    <property type="term" value="P:response to salt stress"/>
    <property type="evidence" value="ECO:0000270"/>
    <property type="project" value="TAIR"/>
</dbReference>
<dbReference type="CDD" id="cd03784">
    <property type="entry name" value="GT1_Gtf-like"/>
    <property type="match status" value="1"/>
</dbReference>
<dbReference type="FunFam" id="3.40.50.2000:FF:000056">
    <property type="entry name" value="Glycosyltransferase"/>
    <property type="match status" value="1"/>
</dbReference>
<dbReference type="FunFam" id="3.40.50.2000:FF:000080">
    <property type="entry name" value="Glycosyltransferase"/>
    <property type="match status" value="1"/>
</dbReference>
<dbReference type="Gene3D" id="3.40.50.2000">
    <property type="entry name" value="Glycogen Phosphorylase B"/>
    <property type="match status" value="2"/>
</dbReference>
<dbReference type="InterPro" id="IPR050481">
    <property type="entry name" value="UDP-glycosyltransf_plant"/>
</dbReference>
<dbReference type="InterPro" id="IPR002213">
    <property type="entry name" value="UDP_glucos_trans"/>
</dbReference>
<dbReference type="InterPro" id="IPR035595">
    <property type="entry name" value="UDP_glycos_trans_CS"/>
</dbReference>
<dbReference type="PANTHER" id="PTHR48048">
    <property type="entry name" value="GLYCOSYLTRANSFERASE"/>
    <property type="match status" value="1"/>
</dbReference>
<dbReference type="PANTHER" id="PTHR48048:SF45">
    <property type="entry name" value="GLYCOSYLTRANSFERASE"/>
    <property type="match status" value="1"/>
</dbReference>
<dbReference type="Pfam" id="PF00201">
    <property type="entry name" value="UDPGT"/>
    <property type="match status" value="1"/>
</dbReference>
<dbReference type="SUPFAM" id="SSF53756">
    <property type="entry name" value="UDP-Glycosyltransferase/glycogen phosphorylase"/>
    <property type="match status" value="1"/>
</dbReference>
<dbReference type="PROSITE" id="PS00375">
    <property type="entry name" value="UDPGT"/>
    <property type="match status" value="1"/>
</dbReference>